<sequence length="48" mass="5705">MCISIDIERKKKSNIYINLYINMKILIYISLVFNNLSALIDKHIISYK</sequence>
<reference key="1">
    <citation type="journal article" date="1995" name="Plant Mol. Biol. Rep.">
        <title>Nucleotide sequence of the cyanelle DNA from Cyanophora paradoxa.</title>
        <authorList>
            <person name="Stirewalt V.L."/>
            <person name="Michalowski C.B."/>
            <person name="Loeffelhardt W."/>
            <person name="Bohnert H.J."/>
            <person name="Bryant D.A."/>
        </authorList>
    </citation>
    <scope>NUCLEOTIDE SEQUENCE [LARGE SCALE GENOMIC DNA]</scope>
    <source>
        <strain>UTEX LB 555 / Pringsheim</strain>
    </source>
</reference>
<reference key="2">
    <citation type="book" date="1997" name="Eukaryotism and symbiosis">
        <title>The complete sequence of the cyanelle genome of Cyanophora paradoxa: the genetic complexity of a primitive plastid.</title>
        <editorList>
            <person name="Schenk H.E.A."/>
            <person name="Herrmann R."/>
            <person name="Jeon K.W."/>
            <person name="Mueller N.E."/>
            <person name="Schwemmler W."/>
        </editorList>
        <authorList>
            <person name="Loeffelhardt W."/>
            <person name="Stirewalt V.L."/>
            <person name="Michalowski C.B."/>
            <person name="Annarella M."/>
            <person name="Farley J.Y."/>
            <person name="Schluchter W.M."/>
            <person name="Chung S."/>
            <person name="Newmann-Spallart C."/>
            <person name="Steiner J.M."/>
            <person name="Jakowitsch J."/>
            <person name="Bohnert H.J."/>
            <person name="Bryant D.A."/>
        </authorList>
    </citation>
    <scope>NUCLEOTIDE SEQUENCE [LARGE SCALE GENOMIC DNA]</scope>
    <source>
        <strain>UTEX LB 555 / Pringsheim</strain>
    </source>
</reference>
<geneLocation type="cyanelle"/>
<protein>
    <recommendedName>
        <fullName>Uncharacterized 5.7 kDa protein in psbM-psbX intergenic region</fullName>
    </recommendedName>
    <alternativeName>
        <fullName>ORF48</fullName>
    </alternativeName>
</protein>
<accession>P48330</accession>
<dbReference type="EMBL" id="U30821">
    <property type="protein sequence ID" value="AAA81282.1"/>
    <property type="molecule type" value="Genomic_DNA"/>
</dbReference>
<dbReference type="PIR" id="T06939">
    <property type="entry name" value="T06939"/>
</dbReference>
<dbReference type="RefSeq" id="NP_043251.1">
    <property type="nucleotide sequence ID" value="NC_001675.1"/>
</dbReference>
<dbReference type="GeneID" id="801674"/>
<dbReference type="GO" id="GO:0009842">
    <property type="term" value="C:cyanelle"/>
    <property type="evidence" value="ECO:0007669"/>
    <property type="project" value="UniProtKB-SubCell"/>
</dbReference>
<organism>
    <name type="scientific">Cyanophora paradoxa</name>
    <dbReference type="NCBI Taxonomy" id="2762"/>
    <lineage>
        <taxon>Eukaryota</taxon>
        <taxon>Glaucocystophyceae</taxon>
        <taxon>Cyanophoraceae</taxon>
        <taxon>Cyanophora</taxon>
    </lineage>
</organism>
<keyword id="KW-0194">Cyanelle</keyword>
<keyword id="KW-0934">Plastid</keyword>
<proteinExistence type="predicted"/>
<feature type="chain" id="PRO_0000217430" description="Uncharacterized 5.7 kDa protein in psbM-psbX intergenic region">
    <location>
        <begin position="1"/>
        <end position="48"/>
    </location>
</feature>
<name>YCX9_CYAPA</name>
<comment type="subcellular location">
    <subcellularLocation>
        <location>Plastid</location>
        <location>Cyanelle</location>
    </subcellularLocation>
</comment>